<reference key="1">
    <citation type="journal article" date="2007" name="Nature">
        <title>Evolution of genes and genomes on the Drosophila phylogeny.</title>
        <authorList>
            <consortium name="Drosophila 12 genomes consortium"/>
        </authorList>
    </citation>
    <scope>NUCLEOTIDE SEQUENCE [LARGE SCALE GENOMIC DNA]</scope>
    <source>
        <strain>Tucson 14030-0811.24</strain>
    </source>
</reference>
<name>RSSA_DROWI</name>
<accession>B4NPT0</accession>
<evidence type="ECO:0000255" key="1">
    <source>
        <dbReference type="HAMAP-Rule" id="MF_03015"/>
    </source>
</evidence>
<evidence type="ECO:0000256" key="2">
    <source>
        <dbReference type="SAM" id="MobiDB-lite"/>
    </source>
</evidence>
<evidence type="ECO:0000305" key="3"/>
<comment type="function">
    <text evidence="1">Required for the assembly and/or stability of the 40S ribosomal subunit. Required for the processing of the 20S rRNA-precursor to mature 18S rRNA in a late step of the maturation of 40S ribosomal subunits. Required during oogenesis and imaginal development.</text>
</comment>
<comment type="subunit">
    <text evidence="1">Component of the small ribosomal subunit. Mature ribosomes consist of a small (40S) and a large (60S) subunit. The 40S subunit contains about 33 different proteins and 1 molecule of RNA (18S). The 60S subunit contains about 49 different proteins and 3 molecules of RNA (28S, 5.8S and 5S). Interacts with oho23B/rpS21.</text>
</comment>
<comment type="subcellular location">
    <subcellularLocation>
        <location evidence="1">Cytoplasm</location>
    </subcellularLocation>
    <subcellularLocation>
        <location evidence="1">Nucleus</location>
    </subcellularLocation>
    <text evidence="1">May associate with nascent RNP complexes within the nucleus.</text>
</comment>
<comment type="similarity">
    <text evidence="1">Belongs to the universal ribosomal protein uS2 family.</text>
</comment>
<proteinExistence type="inferred from homology"/>
<feature type="initiator methionine" description="Removed" evidence="1">
    <location>
        <position position="1"/>
    </location>
</feature>
<feature type="chain" id="PRO_0000371590" description="Small ribosomal subunit protein uS2">
    <location>
        <begin position="2"/>
        <end position="270"/>
    </location>
</feature>
<feature type="region of interest" description="Disordered" evidence="2">
    <location>
        <begin position="251"/>
        <end position="270"/>
    </location>
</feature>
<feature type="compositionally biased region" description="Polar residues" evidence="2">
    <location>
        <begin position="261"/>
        <end position="270"/>
    </location>
</feature>
<sequence length="270" mass="30243">MSGGLDILSLKEDDITKMLVATTHLGSENVNFQMEQYVYKRRADGVNIINLGKTWEKLVLAARAIVAIENASDVFVISSRPIGQRAVLKFAKYTDTTPIAGRFTPGAFTNQIQPAFREPRLLVVTDPMTDHQPIMEASYVNIPVIAFTNTDSPLRYIDIAIPCNNKSPHSIGLMWWLLAREVLRLRGTISRSIEWPVVVDLFFYRDPEEAEKEEAAAKELLPPPKIEEAVDHPVEETTNWADEVAAENVGGVEDWNEDTVKTSWGSDGQF</sequence>
<keyword id="KW-0963">Cytoplasm</keyword>
<keyword id="KW-0217">Developmental protein</keyword>
<keyword id="KW-0539">Nucleus</keyword>
<keyword id="KW-1185">Reference proteome</keyword>
<keyword id="KW-0687">Ribonucleoprotein</keyword>
<keyword id="KW-0689">Ribosomal protein</keyword>
<gene>
    <name evidence="1" type="primary">sta</name>
    <name type="ORF">GK14587</name>
</gene>
<organism>
    <name type="scientific">Drosophila willistoni</name>
    <name type="common">Fruit fly</name>
    <dbReference type="NCBI Taxonomy" id="7260"/>
    <lineage>
        <taxon>Eukaryota</taxon>
        <taxon>Metazoa</taxon>
        <taxon>Ecdysozoa</taxon>
        <taxon>Arthropoda</taxon>
        <taxon>Hexapoda</taxon>
        <taxon>Insecta</taxon>
        <taxon>Pterygota</taxon>
        <taxon>Neoptera</taxon>
        <taxon>Endopterygota</taxon>
        <taxon>Diptera</taxon>
        <taxon>Brachycera</taxon>
        <taxon>Muscomorpha</taxon>
        <taxon>Ephydroidea</taxon>
        <taxon>Drosophilidae</taxon>
        <taxon>Drosophila</taxon>
        <taxon>Sophophora</taxon>
    </lineage>
</organism>
<protein>
    <recommendedName>
        <fullName evidence="1">Small ribosomal subunit protein uS2</fullName>
    </recommendedName>
    <alternativeName>
        <fullName evidence="3">40S ribosomal protein SA</fullName>
    </alternativeName>
    <alternativeName>
        <fullName evidence="1">Protein stubarista</fullName>
    </alternativeName>
</protein>
<dbReference type="EMBL" id="CH964291">
    <property type="protein sequence ID" value="EDW86520.1"/>
    <property type="molecule type" value="Genomic_DNA"/>
</dbReference>
<dbReference type="SMR" id="B4NPT0"/>
<dbReference type="STRING" id="7260.B4NPT0"/>
<dbReference type="EnsemblMetazoa" id="FBtr0245238">
    <property type="protein sequence ID" value="FBpp0243730"/>
    <property type="gene ID" value="FBgn0216593"/>
</dbReference>
<dbReference type="EnsemblMetazoa" id="XM_002075498.4">
    <property type="protein sequence ID" value="XP_002075534.1"/>
    <property type="gene ID" value="LOC6652795"/>
</dbReference>
<dbReference type="GeneID" id="6652795"/>
<dbReference type="KEGG" id="dwi:6652795"/>
<dbReference type="CTD" id="104044"/>
<dbReference type="eggNOG" id="KOG0830">
    <property type="taxonomic scope" value="Eukaryota"/>
</dbReference>
<dbReference type="HOGENOM" id="CLU_058171_1_0_1"/>
<dbReference type="OMA" id="VKNFFEP"/>
<dbReference type="OrthoDB" id="414863at2759"/>
<dbReference type="PhylomeDB" id="B4NPT0"/>
<dbReference type="ChiTaRS" id="sta">
    <property type="organism name" value="fly"/>
</dbReference>
<dbReference type="Proteomes" id="UP000007798">
    <property type="component" value="Unassembled WGS sequence"/>
</dbReference>
<dbReference type="GO" id="GO:0022627">
    <property type="term" value="C:cytosolic small ribosomal subunit"/>
    <property type="evidence" value="ECO:0007669"/>
    <property type="project" value="UniProtKB-UniRule"/>
</dbReference>
<dbReference type="GO" id="GO:0005634">
    <property type="term" value="C:nucleus"/>
    <property type="evidence" value="ECO:0007669"/>
    <property type="project" value="UniProtKB-SubCell"/>
</dbReference>
<dbReference type="GO" id="GO:0043022">
    <property type="term" value="F:ribosome binding"/>
    <property type="evidence" value="ECO:0007669"/>
    <property type="project" value="EnsemblMetazoa"/>
</dbReference>
<dbReference type="GO" id="GO:0003735">
    <property type="term" value="F:structural constituent of ribosome"/>
    <property type="evidence" value="ECO:0007669"/>
    <property type="project" value="UniProtKB-UniRule"/>
</dbReference>
<dbReference type="GO" id="GO:0000028">
    <property type="term" value="P:ribosomal small subunit assembly"/>
    <property type="evidence" value="ECO:0007669"/>
    <property type="project" value="UniProtKB-UniRule"/>
</dbReference>
<dbReference type="GO" id="GO:0006412">
    <property type="term" value="P:translation"/>
    <property type="evidence" value="ECO:0007669"/>
    <property type="project" value="UniProtKB-UniRule"/>
</dbReference>
<dbReference type="CDD" id="cd01425">
    <property type="entry name" value="RPS2"/>
    <property type="match status" value="1"/>
</dbReference>
<dbReference type="FunFam" id="3.40.50.10490:FF:000012">
    <property type="entry name" value="40S ribosomal protein SA"/>
    <property type="match status" value="1"/>
</dbReference>
<dbReference type="Gene3D" id="3.40.50.10490">
    <property type="entry name" value="Glucose-6-phosphate isomerase like protein, domain 1"/>
    <property type="match status" value="1"/>
</dbReference>
<dbReference type="HAMAP" id="MF_03015">
    <property type="entry name" value="Ribosomal_S2_euk"/>
    <property type="match status" value="1"/>
</dbReference>
<dbReference type="InterPro" id="IPR001865">
    <property type="entry name" value="Ribosomal_uS2"/>
</dbReference>
<dbReference type="InterPro" id="IPR032281">
    <property type="entry name" value="Ribosomal_uS2_C"/>
</dbReference>
<dbReference type="InterPro" id="IPR018130">
    <property type="entry name" value="Ribosomal_uS2_CS"/>
</dbReference>
<dbReference type="InterPro" id="IPR027498">
    <property type="entry name" value="Ribosomal_uS2_euk"/>
</dbReference>
<dbReference type="InterPro" id="IPR005707">
    <property type="entry name" value="Ribosomal_uS2_euk/arc"/>
</dbReference>
<dbReference type="InterPro" id="IPR023591">
    <property type="entry name" value="Ribosomal_uS2_flav_dom_sf"/>
</dbReference>
<dbReference type="NCBIfam" id="TIGR01012">
    <property type="entry name" value="uS2_euk_arch"/>
    <property type="match status" value="1"/>
</dbReference>
<dbReference type="PANTHER" id="PTHR11489">
    <property type="entry name" value="40S RIBOSOMAL PROTEIN SA"/>
    <property type="match status" value="1"/>
</dbReference>
<dbReference type="Pfam" id="PF16122">
    <property type="entry name" value="40S_SA_C"/>
    <property type="match status" value="1"/>
</dbReference>
<dbReference type="Pfam" id="PF00318">
    <property type="entry name" value="Ribosomal_S2"/>
    <property type="match status" value="2"/>
</dbReference>
<dbReference type="PRINTS" id="PR00395">
    <property type="entry name" value="RIBOSOMALS2"/>
</dbReference>
<dbReference type="SUPFAM" id="SSF52313">
    <property type="entry name" value="Ribosomal protein S2"/>
    <property type="match status" value="1"/>
</dbReference>
<dbReference type="PROSITE" id="PS00962">
    <property type="entry name" value="RIBOSOMAL_S2_1"/>
    <property type="match status" value="1"/>
</dbReference>
<dbReference type="PROSITE" id="PS00963">
    <property type="entry name" value="RIBOSOMAL_S2_2"/>
    <property type="match status" value="1"/>
</dbReference>